<protein>
    <recommendedName>
        <fullName evidence="1">Bifunctional protein FolD</fullName>
    </recommendedName>
    <domain>
        <recommendedName>
            <fullName evidence="1">Methylenetetrahydrofolate dehydrogenase</fullName>
            <ecNumber evidence="1">1.5.1.5</ecNumber>
        </recommendedName>
    </domain>
    <domain>
        <recommendedName>
            <fullName evidence="1">Methenyltetrahydrofolate cyclohydrolase</fullName>
            <ecNumber evidence="1">3.5.4.9</ecNumber>
        </recommendedName>
    </domain>
</protein>
<dbReference type="EC" id="1.5.1.5" evidence="1"/>
<dbReference type="EC" id="3.5.4.9" evidence="1"/>
<dbReference type="EMBL" id="CP000423">
    <property type="protein sequence ID" value="ABJ70413.1"/>
    <property type="molecule type" value="Genomic_DNA"/>
</dbReference>
<dbReference type="RefSeq" id="WP_011674555.1">
    <property type="nucleotide sequence ID" value="NC_008526.1"/>
</dbReference>
<dbReference type="RefSeq" id="YP_806855.1">
    <property type="nucleotide sequence ID" value="NC_008526.1"/>
</dbReference>
<dbReference type="SMR" id="Q038F9"/>
<dbReference type="STRING" id="321967.LSEI_1639"/>
<dbReference type="PaxDb" id="321967-LSEI_1639"/>
<dbReference type="KEGG" id="lca:LSEI_1639"/>
<dbReference type="PATRIC" id="fig|321967.11.peg.1620"/>
<dbReference type="HOGENOM" id="CLU_034045_2_1_9"/>
<dbReference type="UniPathway" id="UPA00193"/>
<dbReference type="Proteomes" id="UP000001651">
    <property type="component" value="Chromosome"/>
</dbReference>
<dbReference type="GO" id="GO:0005829">
    <property type="term" value="C:cytosol"/>
    <property type="evidence" value="ECO:0007669"/>
    <property type="project" value="TreeGrafter"/>
</dbReference>
<dbReference type="GO" id="GO:0004477">
    <property type="term" value="F:methenyltetrahydrofolate cyclohydrolase activity"/>
    <property type="evidence" value="ECO:0007669"/>
    <property type="project" value="UniProtKB-UniRule"/>
</dbReference>
<dbReference type="GO" id="GO:0004488">
    <property type="term" value="F:methylenetetrahydrofolate dehydrogenase (NADP+) activity"/>
    <property type="evidence" value="ECO:0007669"/>
    <property type="project" value="UniProtKB-UniRule"/>
</dbReference>
<dbReference type="GO" id="GO:0000105">
    <property type="term" value="P:L-histidine biosynthetic process"/>
    <property type="evidence" value="ECO:0007669"/>
    <property type="project" value="UniProtKB-KW"/>
</dbReference>
<dbReference type="GO" id="GO:0009086">
    <property type="term" value="P:methionine biosynthetic process"/>
    <property type="evidence" value="ECO:0007669"/>
    <property type="project" value="UniProtKB-KW"/>
</dbReference>
<dbReference type="GO" id="GO:0006164">
    <property type="term" value="P:purine nucleotide biosynthetic process"/>
    <property type="evidence" value="ECO:0007669"/>
    <property type="project" value="UniProtKB-KW"/>
</dbReference>
<dbReference type="GO" id="GO:0035999">
    <property type="term" value="P:tetrahydrofolate interconversion"/>
    <property type="evidence" value="ECO:0007669"/>
    <property type="project" value="UniProtKB-UniRule"/>
</dbReference>
<dbReference type="CDD" id="cd01080">
    <property type="entry name" value="NAD_bind_m-THF_DH_Cyclohyd"/>
    <property type="match status" value="1"/>
</dbReference>
<dbReference type="FunFam" id="3.40.50.720:FF:000094">
    <property type="entry name" value="Bifunctional protein FolD"/>
    <property type="match status" value="1"/>
</dbReference>
<dbReference type="FunFam" id="3.40.50.10860:FF:000005">
    <property type="entry name" value="C-1-tetrahydrofolate synthase, cytoplasmic, putative"/>
    <property type="match status" value="1"/>
</dbReference>
<dbReference type="Gene3D" id="3.40.50.10860">
    <property type="entry name" value="Leucine Dehydrogenase, chain A, domain 1"/>
    <property type="match status" value="1"/>
</dbReference>
<dbReference type="Gene3D" id="3.40.50.720">
    <property type="entry name" value="NAD(P)-binding Rossmann-like Domain"/>
    <property type="match status" value="1"/>
</dbReference>
<dbReference type="HAMAP" id="MF_01576">
    <property type="entry name" value="THF_DHG_CYH"/>
    <property type="match status" value="1"/>
</dbReference>
<dbReference type="InterPro" id="IPR046346">
    <property type="entry name" value="Aminoacid_DH-like_N_sf"/>
</dbReference>
<dbReference type="InterPro" id="IPR036291">
    <property type="entry name" value="NAD(P)-bd_dom_sf"/>
</dbReference>
<dbReference type="InterPro" id="IPR000672">
    <property type="entry name" value="THF_DH/CycHdrlase"/>
</dbReference>
<dbReference type="InterPro" id="IPR020630">
    <property type="entry name" value="THF_DH/CycHdrlase_cat_dom"/>
</dbReference>
<dbReference type="InterPro" id="IPR020867">
    <property type="entry name" value="THF_DH/CycHdrlase_CS"/>
</dbReference>
<dbReference type="InterPro" id="IPR020631">
    <property type="entry name" value="THF_DH/CycHdrlase_NAD-bd_dom"/>
</dbReference>
<dbReference type="NCBIfam" id="NF010766">
    <property type="entry name" value="PRK14169.1"/>
    <property type="match status" value="1"/>
</dbReference>
<dbReference type="NCBIfam" id="NF010783">
    <property type="entry name" value="PRK14186.1"/>
    <property type="match status" value="1"/>
</dbReference>
<dbReference type="PANTHER" id="PTHR48099:SF5">
    <property type="entry name" value="C-1-TETRAHYDROFOLATE SYNTHASE, CYTOPLASMIC"/>
    <property type="match status" value="1"/>
</dbReference>
<dbReference type="PANTHER" id="PTHR48099">
    <property type="entry name" value="C-1-TETRAHYDROFOLATE SYNTHASE, CYTOPLASMIC-RELATED"/>
    <property type="match status" value="1"/>
</dbReference>
<dbReference type="Pfam" id="PF00763">
    <property type="entry name" value="THF_DHG_CYH"/>
    <property type="match status" value="1"/>
</dbReference>
<dbReference type="Pfam" id="PF02882">
    <property type="entry name" value="THF_DHG_CYH_C"/>
    <property type="match status" value="1"/>
</dbReference>
<dbReference type="PRINTS" id="PR00085">
    <property type="entry name" value="THFDHDRGNASE"/>
</dbReference>
<dbReference type="SUPFAM" id="SSF53223">
    <property type="entry name" value="Aminoacid dehydrogenase-like, N-terminal domain"/>
    <property type="match status" value="1"/>
</dbReference>
<dbReference type="SUPFAM" id="SSF51735">
    <property type="entry name" value="NAD(P)-binding Rossmann-fold domains"/>
    <property type="match status" value="1"/>
</dbReference>
<dbReference type="PROSITE" id="PS00766">
    <property type="entry name" value="THF_DHG_CYH_1"/>
    <property type="match status" value="1"/>
</dbReference>
<dbReference type="PROSITE" id="PS00767">
    <property type="entry name" value="THF_DHG_CYH_2"/>
    <property type="match status" value="1"/>
</dbReference>
<sequence length="283" mass="29582">MATRLDGRAVSKKILADLKQTIAQLAQHDVTPTLAVVLVGSNPASEVYVRNKQRRAEDIGVRSLMFRMPEATTQADLLAKVAELNHDPDIDAILVQLPLPAGLDEQAVIDAIDPDKDVDGFSPVSVGRLWANEPTVVASTPYGIMALLDAYDIDVAGKRVVIIGRSNIVGRPLAGLMVNHDATVTIAHSKTRDLKQLAKEADILVVAVGVPHFIGADAVKPGAVVIDVGISRGADGKVLGDVDEAAVAPIASAITPVPGGVGPMTIASLMAQTVTLAKRRANG</sequence>
<feature type="chain" id="PRO_0000305829" description="Bifunctional protein FolD">
    <location>
        <begin position="1"/>
        <end position="283"/>
    </location>
</feature>
<feature type="binding site" evidence="1">
    <location>
        <begin position="164"/>
        <end position="166"/>
    </location>
    <ligand>
        <name>NADP(+)</name>
        <dbReference type="ChEBI" id="CHEBI:58349"/>
    </ligand>
</feature>
<feature type="binding site" evidence="1">
    <location>
        <position position="189"/>
    </location>
    <ligand>
        <name>NADP(+)</name>
        <dbReference type="ChEBI" id="CHEBI:58349"/>
    </ligand>
</feature>
<feature type="binding site" evidence="1">
    <location>
        <position position="230"/>
    </location>
    <ligand>
        <name>NADP(+)</name>
        <dbReference type="ChEBI" id="CHEBI:58349"/>
    </ligand>
</feature>
<organism>
    <name type="scientific">Lacticaseibacillus paracasei (strain ATCC 334 / BCRC 17002 / CCUG 31169 / CIP 107868 / KCTC 3260 / NRRL B-441)</name>
    <name type="common">Lactobacillus paracasei</name>
    <dbReference type="NCBI Taxonomy" id="321967"/>
    <lineage>
        <taxon>Bacteria</taxon>
        <taxon>Bacillati</taxon>
        <taxon>Bacillota</taxon>
        <taxon>Bacilli</taxon>
        <taxon>Lactobacillales</taxon>
        <taxon>Lactobacillaceae</taxon>
        <taxon>Lacticaseibacillus</taxon>
    </lineage>
</organism>
<proteinExistence type="inferred from homology"/>
<name>FOLD_LACP3</name>
<accession>Q038F9</accession>
<gene>
    <name evidence="1" type="primary">folD</name>
    <name type="ordered locus">LSEI_1639</name>
</gene>
<evidence type="ECO:0000255" key="1">
    <source>
        <dbReference type="HAMAP-Rule" id="MF_01576"/>
    </source>
</evidence>
<comment type="function">
    <text evidence="1">Catalyzes the oxidation of 5,10-methylenetetrahydrofolate to 5,10-methenyltetrahydrofolate and then the hydrolysis of 5,10-methenyltetrahydrofolate to 10-formyltetrahydrofolate.</text>
</comment>
<comment type="catalytic activity">
    <reaction evidence="1">
        <text>(6R)-5,10-methylene-5,6,7,8-tetrahydrofolate + NADP(+) = (6R)-5,10-methenyltetrahydrofolate + NADPH</text>
        <dbReference type="Rhea" id="RHEA:22812"/>
        <dbReference type="ChEBI" id="CHEBI:15636"/>
        <dbReference type="ChEBI" id="CHEBI:57455"/>
        <dbReference type="ChEBI" id="CHEBI:57783"/>
        <dbReference type="ChEBI" id="CHEBI:58349"/>
        <dbReference type="EC" id="1.5.1.5"/>
    </reaction>
</comment>
<comment type="catalytic activity">
    <reaction evidence="1">
        <text>(6R)-5,10-methenyltetrahydrofolate + H2O = (6R)-10-formyltetrahydrofolate + H(+)</text>
        <dbReference type="Rhea" id="RHEA:23700"/>
        <dbReference type="ChEBI" id="CHEBI:15377"/>
        <dbReference type="ChEBI" id="CHEBI:15378"/>
        <dbReference type="ChEBI" id="CHEBI:57455"/>
        <dbReference type="ChEBI" id="CHEBI:195366"/>
        <dbReference type="EC" id="3.5.4.9"/>
    </reaction>
</comment>
<comment type="pathway">
    <text evidence="1">One-carbon metabolism; tetrahydrofolate interconversion.</text>
</comment>
<comment type="subunit">
    <text evidence="1">Homodimer.</text>
</comment>
<comment type="similarity">
    <text evidence="1">Belongs to the tetrahydrofolate dehydrogenase/cyclohydrolase family.</text>
</comment>
<reference key="1">
    <citation type="journal article" date="2006" name="Proc. Natl. Acad. Sci. U.S.A.">
        <title>Comparative genomics of the lactic acid bacteria.</title>
        <authorList>
            <person name="Makarova K.S."/>
            <person name="Slesarev A."/>
            <person name="Wolf Y.I."/>
            <person name="Sorokin A."/>
            <person name="Mirkin B."/>
            <person name="Koonin E.V."/>
            <person name="Pavlov A."/>
            <person name="Pavlova N."/>
            <person name="Karamychev V."/>
            <person name="Polouchine N."/>
            <person name="Shakhova V."/>
            <person name="Grigoriev I."/>
            <person name="Lou Y."/>
            <person name="Rohksar D."/>
            <person name="Lucas S."/>
            <person name="Huang K."/>
            <person name="Goodstein D.M."/>
            <person name="Hawkins T."/>
            <person name="Plengvidhya V."/>
            <person name="Welker D."/>
            <person name="Hughes J."/>
            <person name="Goh Y."/>
            <person name="Benson A."/>
            <person name="Baldwin K."/>
            <person name="Lee J.-H."/>
            <person name="Diaz-Muniz I."/>
            <person name="Dosti B."/>
            <person name="Smeianov V."/>
            <person name="Wechter W."/>
            <person name="Barabote R."/>
            <person name="Lorca G."/>
            <person name="Altermann E."/>
            <person name="Barrangou R."/>
            <person name="Ganesan B."/>
            <person name="Xie Y."/>
            <person name="Rawsthorne H."/>
            <person name="Tamir D."/>
            <person name="Parker C."/>
            <person name="Breidt F."/>
            <person name="Broadbent J.R."/>
            <person name="Hutkins R."/>
            <person name="O'Sullivan D."/>
            <person name="Steele J."/>
            <person name="Unlu G."/>
            <person name="Saier M.H. Jr."/>
            <person name="Klaenhammer T."/>
            <person name="Richardson P."/>
            <person name="Kozyavkin S."/>
            <person name="Weimer B.C."/>
            <person name="Mills D.A."/>
        </authorList>
    </citation>
    <scope>NUCLEOTIDE SEQUENCE [LARGE SCALE GENOMIC DNA]</scope>
    <source>
        <strain>ATCC 334 / BCRC 17002 / CCUG 31169 / CIP 107868 / KCTC 3260 / NRRL B-441</strain>
    </source>
</reference>
<keyword id="KW-0028">Amino-acid biosynthesis</keyword>
<keyword id="KW-0368">Histidine biosynthesis</keyword>
<keyword id="KW-0378">Hydrolase</keyword>
<keyword id="KW-0486">Methionine biosynthesis</keyword>
<keyword id="KW-0511">Multifunctional enzyme</keyword>
<keyword id="KW-0521">NADP</keyword>
<keyword id="KW-0554">One-carbon metabolism</keyword>
<keyword id="KW-0560">Oxidoreductase</keyword>
<keyword id="KW-0658">Purine biosynthesis</keyword>
<keyword id="KW-1185">Reference proteome</keyword>